<sequence>MISSFHRPTVARVNLQAIKENVASVQKHIPLGVKTYAVVKADAYGHGAVQVSKALLPQVDGYCVSNLDEALQLRQAGIDKEILILGVLLPNELELAVANAITVTIASLDWIALARLEKKECQGLKVHVKVDSGMGRIGLRSSKAVNLLIDSLKELGADVEGIFTHFATADEADDTKFNQQLQFFKKLIAGLEDKPRLVHASNSATSIWHSDTIFNAVRLGIVSYGLNPSGSDLSLPFPLQEALSLESSLVHVKMISAGDTVGYGATYTAKKSEYVGTVPIGYADGWTRNMQGFSVLVDGQFCEIIGRVSMDQLTIRLPKAYPLGTKVTLIGSNQQKNISTTDIANYRNTINYEVLCLLSDRIPRIY</sequence>
<gene>
    <name type="primary">alr</name>
    <name type="ordered locus">M28_Spy1522</name>
</gene>
<evidence type="ECO:0000255" key="1">
    <source>
        <dbReference type="HAMAP-Rule" id="MF_01201"/>
    </source>
</evidence>
<dbReference type="EC" id="5.1.1.1" evidence="1"/>
<dbReference type="EMBL" id="CP000056">
    <property type="protein sequence ID" value="AAX72632.1"/>
    <property type="molecule type" value="Genomic_DNA"/>
</dbReference>
<dbReference type="RefSeq" id="WP_011285112.1">
    <property type="nucleotide sequence ID" value="NC_007296.2"/>
</dbReference>
<dbReference type="SMR" id="Q48RM8"/>
<dbReference type="KEGG" id="spb:M28_Spy1522"/>
<dbReference type="HOGENOM" id="CLU_028393_2_1_9"/>
<dbReference type="UniPathway" id="UPA00042">
    <property type="reaction ID" value="UER00497"/>
</dbReference>
<dbReference type="GO" id="GO:0005829">
    <property type="term" value="C:cytosol"/>
    <property type="evidence" value="ECO:0007669"/>
    <property type="project" value="TreeGrafter"/>
</dbReference>
<dbReference type="GO" id="GO:0008784">
    <property type="term" value="F:alanine racemase activity"/>
    <property type="evidence" value="ECO:0007669"/>
    <property type="project" value="UniProtKB-UniRule"/>
</dbReference>
<dbReference type="GO" id="GO:0030170">
    <property type="term" value="F:pyridoxal phosphate binding"/>
    <property type="evidence" value="ECO:0007669"/>
    <property type="project" value="UniProtKB-UniRule"/>
</dbReference>
<dbReference type="GO" id="GO:0030632">
    <property type="term" value="P:D-alanine biosynthetic process"/>
    <property type="evidence" value="ECO:0007669"/>
    <property type="project" value="UniProtKB-UniRule"/>
</dbReference>
<dbReference type="GO" id="GO:0009252">
    <property type="term" value="P:peptidoglycan biosynthetic process"/>
    <property type="evidence" value="ECO:0007669"/>
    <property type="project" value="TreeGrafter"/>
</dbReference>
<dbReference type="CDD" id="cd00430">
    <property type="entry name" value="PLPDE_III_AR"/>
    <property type="match status" value="1"/>
</dbReference>
<dbReference type="FunFam" id="2.40.37.10:FF:000006">
    <property type="entry name" value="Alanine racemase"/>
    <property type="match status" value="1"/>
</dbReference>
<dbReference type="FunFam" id="3.20.20.10:FF:000002">
    <property type="entry name" value="Alanine racemase"/>
    <property type="match status" value="1"/>
</dbReference>
<dbReference type="Gene3D" id="3.20.20.10">
    <property type="entry name" value="Alanine racemase"/>
    <property type="match status" value="1"/>
</dbReference>
<dbReference type="Gene3D" id="2.40.37.10">
    <property type="entry name" value="Lyase, Ornithine Decarboxylase, Chain A, domain 1"/>
    <property type="match status" value="1"/>
</dbReference>
<dbReference type="HAMAP" id="MF_01201">
    <property type="entry name" value="Ala_racemase"/>
    <property type="match status" value="1"/>
</dbReference>
<dbReference type="InterPro" id="IPR000821">
    <property type="entry name" value="Ala_racemase"/>
</dbReference>
<dbReference type="InterPro" id="IPR009006">
    <property type="entry name" value="Ala_racemase/Decarboxylase_C"/>
</dbReference>
<dbReference type="InterPro" id="IPR011079">
    <property type="entry name" value="Ala_racemase_C"/>
</dbReference>
<dbReference type="InterPro" id="IPR001608">
    <property type="entry name" value="Ala_racemase_N"/>
</dbReference>
<dbReference type="InterPro" id="IPR020622">
    <property type="entry name" value="Ala_racemase_pyridoxalP-BS"/>
</dbReference>
<dbReference type="InterPro" id="IPR029066">
    <property type="entry name" value="PLP-binding_barrel"/>
</dbReference>
<dbReference type="NCBIfam" id="TIGR00492">
    <property type="entry name" value="alr"/>
    <property type="match status" value="1"/>
</dbReference>
<dbReference type="PANTHER" id="PTHR30511">
    <property type="entry name" value="ALANINE RACEMASE"/>
    <property type="match status" value="1"/>
</dbReference>
<dbReference type="PANTHER" id="PTHR30511:SF0">
    <property type="entry name" value="ALANINE RACEMASE, CATABOLIC-RELATED"/>
    <property type="match status" value="1"/>
</dbReference>
<dbReference type="Pfam" id="PF00842">
    <property type="entry name" value="Ala_racemase_C"/>
    <property type="match status" value="1"/>
</dbReference>
<dbReference type="Pfam" id="PF01168">
    <property type="entry name" value="Ala_racemase_N"/>
    <property type="match status" value="1"/>
</dbReference>
<dbReference type="PRINTS" id="PR00992">
    <property type="entry name" value="ALARACEMASE"/>
</dbReference>
<dbReference type="SMART" id="SM01005">
    <property type="entry name" value="Ala_racemase_C"/>
    <property type="match status" value="1"/>
</dbReference>
<dbReference type="SUPFAM" id="SSF50621">
    <property type="entry name" value="Alanine racemase C-terminal domain-like"/>
    <property type="match status" value="1"/>
</dbReference>
<dbReference type="SUPFAM" id="SSF51419">
    <property type="entry name" value="PLP-binding barrel"/>
    <property type="match status" value="1"/>
</dbReference>
<dbReference type="PROSITE" id="PS00395">
    <property type="entry name" value="ALANINE_RACEMASE"/>
    <property type="match status" value="1"/>
</dbReference>
<reference key="1">
    <citation type="journal article" date="2005" name="J. Infect. Dis.">
        <title>Genome sequence of a serotype M28 strain of group A Streptococcus: potential new insights into puerperal sepsis and bacterial disease specificity.</title>
        <authorList>
            <person name="Green N.M."/>
            <person name="Zhang S."/>
            <person name="Porcella S.F."/>
            <person name="Nagiec M.J."/>
            <person name="Barbian K.D."/>
            <person name="Beres S.B."/>
            <person name="Lefebvre R.B."/>
            <person name="Musser J.M."/>
        </authorList>
    </citation>
    <scope>NUCLEOTIDE SEQUENCE [LARGE SCALE GENOMIC DNA]</scope>
    <source>
        <strain>MGAS6180</strain>
    </source>
</reference>
<organism>
    <name type="scientific">Streptococcus pyogenes serotype M28 (strain MGAS6180)</name>
    <dbReference type="NCBI Taxonomy" id="319701"/>
    <lineage>
        <taxon>Bacteria</taxon>
        <taxon>Bacillati</taxon>
        <taxon>Bacillota</taxon>
        <taxon>Bacilli</taxon>
        <taxon>Lactobacillales</taxon>
        <taxon>Streptococcaceae</taxon>
        <taxon>Streptococcus</taxon>
    </lineage>
</organism>
<comment type="function">
    <text evidence="1">Catalyzes the interconversion of L-alanine and D-alanine. May also act on other amino acids.</text>
</comment>
<comment type="catalytic activity">
    <reaction evidence="1">
        <text>L-alanine = D-alanine</text>
        <dbReference type="Rhea" id="RHEA:20249"/>
        <dbReference type="ChEBI" id="CHEBI:57416"/>
        <dbReference type="ChEBI" id="CHEBI:57972"/>
        <dbReference type="EC" id="5.1.1.1"/>
    </reaction>
</comment>
<comment type="cofactor">
    <cofactor evidence="1">
        <name>pyridoxal 5'-phosphate</name>
        <dbReference type="ChEBI" id="CHEBI:597326"/>
    </cofactor>
</comment>
<comment type="pathway">
    <text evidence="1">Amino-acid biosynthesis; D-alanine biosynthesis; D-alanine from L-alanine: step 1/1.</text>
</comment>
<comment type="similarity">
    <text evidence="1">Belongs to the alanine racemase family.</text>
</comment>
<protein>
    <recommendedName>
        <fullName evidence="1">Alanine racemase</fullName>
        <ecNumber evidence="1">5.1.1.1</ecNumber>
    </recommendedName>
</protein>
<proteinExistence type="inferred from homology"/>
<feature type="chain" id="PRO_1000066051" description="Alanine racemase">
    <location>
        <begin position="1"/>
        <end position="366"/>
    </location>
</feature>
<feature type="active site" description="Proton acceptor; specific for D-alanine" evidence="1">
    <location>
        <position position="40"/>
    </location>
</feature>
<feature type="active site" description="Proton acceptor; specific for L-alanine" evidence="1">
    <location>
        <position position="263"/>
    </location>
</feature>
<feature type="binding site" evidence="1">
    <location>
        <position position="136"/>
    </location>
    <ligand>
        <name>substrate</name>
    </ligand>
</feature>
<feature type="binding site" evidence="1">
    <location>
        <position position="310"/>
    </location>
    <ligand>
        <name>substrate</name>
    </ligand>
</feature>
<feature type="modified residue" description="N6-(pyridoxal phosphate)lysine" evidence="1">
    <location>
        <position position="40"/>
    </location>
</feature>
<keyword id="KW-0413">Isomerase</keyword>
<keyword id="KW-0663">Pyridoxal phosphate</keyword>
<accession>Q48RM8</accession>
<name>ALR_STRPM</name>